<evidence type="ECO:0000250" key="1">
    <source>
        <dbReference type="UniProtKB" id="E9QA62"/>
    </source>
</evidence>
<evidence type="ECO:0000250" key="2">
    <source>
        <dbReference type="UniProtKB" id="Q0VAK6"/>
    </source>
</evidence>
<evidence type="ECO:0000255" key="3"/>
<evidence type="ECO:0000255" key="4">
    <source>
        <dbReference type="PROSITE-ProRule" id="PRU00406"/>
    </source>
</evidence>
<evidence type="ECO:0000256" key="5">
    <source>
        <dbReference type="SAM" id="MobiDB-lite"/>
    </source>
</evidence>
<evidence type="ECO:0000269" key="6">
    <source>
    </source>
</evidence>
<evidence type="ECO:0000303" key="7">
    <source>
    </source>
</evidence>
<evidence type="ECO:0000305" key="8"/>
<evidence type="ECO:0000312" key="9">
    <source>
        <dbReference type="ZFIN" id="ZDB-GENE-090313-353"/>
    </source>
</evidence>
<name>LMOD3_DANRE</name>
<comment type="function">
    <text evidence="6">Essential for the organization of sarcomeric thin filaments in skeletal muscle.</text>
</comment>
<comment type="subcellular location">
    <subcellularLocation>
        <location evidence="2">Cytoplasm</location>
    </subcellularLocation>
    <subcellularLocation>
        <location evidence="1">Cytoplasm</location>
        <location evidence="1">Myofibril</location>
        <location evidence="1">Sarcomere</location>
        <location evidence="1">A band</location>
    </subcellularLocation>
    <subcellularLocation>
        <location evidence="2">Cytoplasm</location>
        <location evidence="2">Myofibril</location>
        <location evidence="2">Sarcomere</location>
        <location evidence="2">M line</location>
    </subcellularLocation>
    <subcellularLocation>
        <location evidence="2">Cytoplasm</location>
        <location evidence="2">Cytoskeleton</location>
    </subcellularLocation>
</comment>
<comment type="tissue specificity">
    <text evidence="6">expressed in muscle (at protein level).</text>
</comment>
<comment type="disruption phenotype">
    <text evidence="6">Morpholino knockdown of the protein causes short bodies, bent tails, and reduced tail birefringence, consistent with abnormal skeletal muscle organization, in fish larvae, 3 days after fertilization. Larvae exhibit reduced trunk size, that generate less force than that of wild-type counterparts, and aberrant accumulation of alpha-actinin. Mutant embryos show abnormal motor function, with reduced spontaneous coiling and diminished touch-evoked escape responses.</text>
</comment>
<comment type="similarity">
    <text evidence="8">Belongs to the tropomodulin family.</text>
</comment>
<accession>E7F7X0</accession>
<feature type="chain" id="PRO_0000432424" description="Leiomodin-3">
    <location>
        <begin position="1"/>
        <end position="670"/>
    </location>
</feature>
<feature type="domain" description="WH2" evidence="4">
    <location>
        <begin position="637"/>
        <end position="656"/>
    </location>
</feature>
<feature type="region of interest" description="Disordered" evidence="5">
    <location>
        <begin position="34"/>
        <end position="72"/>
    </location>
</feature>
<feature type="region of interest" description="Disordered" evidence="5">
    <location>
        <begin position="94"/>
        <end position="120"/>
    </location>
</feature>
<feature type="region of interest" description="Disordered" evidence="5">
    <location>
        <begin position="139"/>
        <end position="165"/>
    </location>
</feature>
<feature type="region of interest" description="Disordered" evidence="5">
    <location>
        <begin position="202"/>
        <end position="274"/>
    </location>
</feature>
<feature type="region of interest" description="Disordered" evidence="5">
    <location>
        <begin position="517"/>
        <end position="556"/>
    </location>
</feature>
<feature type="coiled-coil region" evidence="3">
    <location>
        <begin position="150"/>
        <end position="183"/>
    </location>
</feature>
<feature type="coiled-coil region" evidence="3">
    <location>
        <begin position="464"/>
        <end position="494"/>
    </location>
</feature>
<feature type="compositionally biased region" description="Basic and acidic residues" evidence="5">
    <location>
        <begin position="40"/>
        <end position="63"/>
    </location>
</feature>
<feature type="compositionally biased region" description="Basic and acidic residues" evidence="5">
    <location>
        <begin position="97"/>
        <end position="112"/>
    </location>
</feature>
<feature type="compositionally biased region" description="Basic and acidic residues" evidence="5">
    <location>
        <begin position="153"/>
        <end position="163"/>
    </location>
</feature>
<feature type="compositionally biased region" description="Basic and acidic residues" evidence="5">
    <location>
        <begin position="205"/>
        <end position="214"/>
    </location>
</feature>
<feature type="compositionally biased region" description="Basic and acidic residues" evidence="5">
    <location>
        <begin position="249"/>
        <end position="261"/>
    </location>
</feature>
<gene>
    <name evidence="9" type="primary">lmod3</name>
    <name evidence="9" type="synonym">si:dkey-90a13.7</name>
</gene>
<sequence>MSERTEQESYTDKIDEDEILAGLSAEELKQLQSEMDDIAPDERVPVGLRQKDASHEMTVRDCTEPESEEEIDEDEILAGLSAEELKQLQSEMEEIAPDERVPVGMRQRDQTDKPPTGSFDHRSLVEYLYWEKESKRMLEEERVPTTLLPSQKTNEEHEAKNEDKVEELELVYEEIVEEVEGGQGDAVVDEVIEEVIMEVEEEDKVCDKPVKTDLDATDPTVTSEDGLQRPSESADANVEAKTDQSGLDTETKVNEEKKEDSTEPAPSSYENWVPEKEERVISKLKIPKLALGGNTFVKKTARPSGNETNLESTLDKIRNNNPSVTDVNLNNIENIPKEMLLDYVNSLKKNRHVKTFSIANTGADENVAFTLANMLKENRSITTLNIESNFITGKGIVAIIRCLQFNETLTELRFHNQRHMLGHHAEMEVSRLLKANNTLLKMGYHFELPGPRMVVTNLLTRNLDRQRQQRMEEQKLQQMKEQRKVMEMYEDSLNLPPGMLEMLGGYIPLSLLQNCQNGAEDIPEDSPEPSPQPSPPHQLCKTQHLAPQQHPPNLSTGNLFEEVQLKKTPKRRDPLLEWNQCDERKDGRPNVHLRSVPKKRSIAREGPVDERANLKDMIKTLKPVPRRREPPKVDLTPRDHLLSEIRQSNVAYLKAVPLPKILESQETSLF</sequence>
<dbReference type="EMBL" id="BX897727">
    <property type="status" value="NOT_ANNOTATED_CDS"/>
    <property type="molecule type" value="Genomic_DNA"/>
</dbReference>
<dbReference type="RefSeq" id="XP_003201226.1">
    <property type="nucleotide sequence ID" value="XM_003201178.5"/>
</dbReference>
<dbReference type="RefSeq" id="XP_021330175.1">
    <property type="nucleotide sequence ID" value="XM_021474500.2"/>
</dbReference>
<dbReference type="SMR" id="E7F7X0"/>
<dbReference type="FunCoup" id="E7F7X0">
    <property type="interactions" value="995"/>
</dbReference>
<dbReference type="STRING" id="7955.ENSDARP00000085297"/>
<dbReference type="PaxDb" id="7955-ENSDARP00000085297"/>
<dbReference type="Ensembl" id="ENSDART00000090864">
    <property type="protein sequence ID" value="ENSDARP00000085297"/>
    <property type="gene ID" value="ENSDARG00000062662"/>
</dbReference>
<dbReference type="Ensembl" id="ENSDART00000193217">
    <property type="protein sequence ID" value="ENSDARP00000151281"/>
    <property type="gene ID" value="ENSDARG00000115769"/>
</dbReference>
<dbReference type="GeneID" id="100149390"/>
<dbReference type="KEGG" id="dre:100149390"/>
<dbReference type="AGR" id="ZFIN:ZDB-GENE-090313-353"/>
<dbReference type="CTD" id="56203"/>
<dbReference type="ZFIN" id="ZDB-GENE-090313-353">
    <property type="gene designation" value="lmod3"/>
</dbReference>
<dbReference type="eggNOG" id="KOG3735">
    <property type="taxonomic scope" value="Eukaryota"/>
</dbReference>
<dbReference type="HOGENOM" id="CLU_031052_4_1_1"/>
<dbReference type="InParanoid" id="E7F7X0"/>
<dbReference type="OMA" id="GMWERLG"/>
<dbReference type="OrthoDB" id="2163268at2759"/>
<dbReference type="PhylomeDB" id="E7F7X0"/>
<dbReference type="TreeFam" id="TF315841"/>
<dbReference type="PRO" id="PR:E7F7X0"/>
<dbReference type="Proteomes" id="UP000000437">
    <property type="component" value="Alternate scaffold 23"/>
</dbReference>
<dbReference type="Proteomes" id="UP000000437">
    <property type="component" value="Chromosome 23"/>
</dbReference>
<dbReference type="Bgee" id="ENSDARG00000062662">
    <property type="expression patterns" value="Expressed in muscle tissue and 12 other cell types or tissues"/>
</dbReference>
<dbReference type="GO" id="GO:0005856">
    <property type="term" value="C:cytoskeleton"/>
    <property type="evidence" value="ECO:0000318"/>
    <property type="project" value="GO_Central"/>
</dbReference>
<dbReference type="GO" id="GO:0031430">
    <property type="term" value="C:M band"/>
    <property type="evidence" value="ECO:0007669"/>
    <property type="project" value="UniProtKB-SubCell"/>
</dbReference>
<dbReference type="GO" id="GO:0030016">
    <property type="term" value="C:myofibril"/>
    <property type="evidence" value="ECO:0000318"/>
    <property type="project" value="GO_Central"/>
</dbReference>
<dbReference type="GO" id="GO:0005865">
    <property type="term" value="C:striated muscle thin filament"/>
    <property type="evidence" value="ECO:0000318"/>
    <property type="project" value="GO_Central"/>
</dbReference>
<dbReference type="GO" id="GO:0005523">
    <property type="term" value="F:tropomyosin binding"/>
    <property type="evidence" value="ECO:0000318"/>
    <property type="project" value="GO_Central"/>
</dbReference>
<dbReference type="GO" id="GO:0007015">
    <property type="term" value="P:actin filament organization"/>
    <property type="evidence" value="ECO:0000318"/>
    <property type="project" value="GO_Central"/>
</dbReference>
<dbReference type="GO" id="GO:0006936">
    <property type="term" value="P:muscle contraction"/>
    <property type="evidence" value="ECO:0000315"/>
    <property type="project" value="ZFIN"/>
</dbReference>
<dbReference type="GO" id="GO:0030239">
    <property type="term" value="P:myofibril assembly"/>
    <property type="evidence" value="ECO:0000318"/>
    <property type="project" value="GO_Central"/>
</dbReference>
<dbReference type="GO" id="GO:0051694">
    <property type="term" value="P:pointed-end actin filament capping"/>
    <property type="evidence" value="ECO:0007669"/>
    <property type="project" value="InterPro"/>
</dbReference>
<dbReference type="GO" id="GO:0048741">
    <property type="term" value="P:skeletal muscle fiber development"/>
    <property type="evidence" value="ECO:0000250"/>
    <property type="project" value="UniProtKB"/>
</dbReference>
<dbReference type="GO" id="GO:0030240">
    <property type="term" value="P:skeletal muscle thin filament assembly"/>
    <property type="evidence" value="ECO:0000315"/>
    <property type="project" value="ZFIN"/>
</dbReference>
<dbReference type="FunFam" id="3.80.10.10:FF:000078">
    <property type="entry name" value="Leiomodin 3"/>
    <property type="match status" value="1"/>
</dbReference>
<dbReference type="Gene3D" id="3.80.10.10">
    <property type="entry name" value="Ribonuclease Inhibitor"/>
    <property type="match status" value="1"/>
</dbReference>
<dbReference type="InterPro" id="IPR032675">
    <property type="entry name" value="LRR_dom_sf"/>
</dbReference>
<dbReference type="InterPro" id="IPR004934">
    <property type="entry name" value="TMOD"/>
</dbReference>
<dbReference type="PANTHER" id="PTHR10901:SF3">
    <property type="entry name" value="LEIOMODIN-3"/>
    <property type="match status" value="1"/>
</dbReference>
<dbReference type="PANTHER" id="PTHR10901">
    <property type="entry name" value="TROPOMODULIN"/>
    <property type="match status" value="1"/>
</dbReference>
<dbReference type="Pfam" id="PF03250">
    <property type="entry name" value="Tropomodulin"/>
    <property type="match status" value="2"/>
</dbReference>
<dbReference type="SUPFAM" id="SSF52047">
    <property type="entry name" value="RNI-like"/>
    <property type="match status" value="1"/>
</dbReference>
<protein>
    <recommendedName>
        <fullName evidence="7">Leiomodin-3</fullName>
    </recommendedName>
</protein>
<keyword id="KW-0175">Coiled coil</keyword>
<keyword id="KW-0963">Cytoplasm</keyword>
<keyword id="KW-0206">Cytoskeleton</keyword>
<keyword id="KW-1185">Reference proteome</keyword>
<reference key="1">
    <citation type="journal article" date="2013" name="Nature">
        <title>The zebrafish reference genome sequence and its relationship to the human genome.</title>
        <authorList>
            <person name="Howe K."/>
            <person name="Clark M.D."/>
            <person name="Torroja C.F."/>
            <person name="Torrance J."/>
            <person name="Berthelot C."/>
            <person name="Muffato M."/>
            <person name="Collins J.E."/>
            <person name="Humphray S."/>
            <person name="McLaren K."/>
            <person name="Matthews L."/>
            <person name="McLaren S."/>
            <person name="Sealy I."/>
            <person name="Caccamo M."/>
            <person name="Churcher C."/>
            <person name="Scott C."/>
            <person name="Barrett J.C."/>
            <person name="Koch R."/>
            <person name="Rauch G.J."/>
            <person name="White S."/>
            <person name="Chow W."/>
            <person name="Kilian B."/>
            <person name="Quintais L.T."/>
            <person name="Guerra-Assuncao J.A."/>
            <person name="Zhou Y."/>
            <person name="Gu Y."/>
            <person name="Yen J."/>
            <person name="Vogel J.H."/>
            <person name="Eyre T."/>
            <person name="Redmond S."/>
            <person name="Banerjee R."/>
            <person name="Chi J."/>
            <person name="Fu B."/>
            <person name="Langley E."/>
            <person name="Maguire S.F."/>
            <person name="Laird G.K."/>
            <person name="Lloyd D."/>
            <person name="Kenyon E."/>
            <person name="Donaldson S."/>
            <person name="Sehra H."/>
            <person name="Almeida-King J."/>
            <person name="Loveland J."/>
            <person name="Trevanion S."/>
            <person name="Jones M."/>
            <person name="Quail M."/>
            <person name="Willey D."/>
            <person name="Hunt A."/>
            <person name="Burton J."/>
            <person name="Sims S."/>
            <person name="McLay K."/>
            <person name="Plumb B."/>
            <person name="Davis J."/>
            <person name="Clee C."/>
            <person name="Oliver K."/>
            <person name="Clark R."/>
            <person name="Riddle C."/>
            <person name="Elliot D."/>
            <person name="Threadgold G."/>
            <person name="Harden G."/>
            <person name="Ware D."/>
            <person name="Begum S."/>
            <person name="Mortimore B."/>
            <person name="Kerry G."/>
            <person name="Heath P."/>
            <person name="Phillimore B."/>
            <person name="Tracey A."/>
            <person name="Corby N."/>
            <person name="Dunn M."/>
            <person name="Johnson C."/>
            <person name="Wood J."/>
            <person name="Clark S."/>
            <person name="Pelan S."/>
            <person name="Griffiths G."/>
            <person name="Smith M."/>
            <person name="Glithero R."/>
            <person name="Howden P."/>
            <person name="Barker N."/>
            <person name="Lloyd C."/>
            <person name="Stevens C."/>
            <person name="Harley J."/>
            <person name="Holt K."/>
            <person name="Panagiotidis G."/>
            <person name="Lovell J."/>
            <person name="Beasley H."/>
            <person name="Henderson C."/>
            <person name="Gordon D."/>
            <person name="Auger K."/>
            <person name="Wright D."/>
            <person name="Collins J."/>
            <person name="Raisen C."/>
            <person name="Dyer L."/>
            <person name="Leung K."/>
            <person name="Robertson L."/>
            <person name="Ambridge K."/>
            <person name="Leongamornlert D."/>
            <person name="McGuire S."/>
            <person name="Gilderthorp R."/>
            <person name="Griffiths C."/>
            <person name="Manthravadi D."/>
            <person name="Nichol S."/>
            <person name="Barker G."/>
            <person name="Whitehead S."/>
            <person name="Kay M."/>
            <person name="Brown J."/>
            <person name="Murnane C."/>
            <person name="Gray E."/>
            <person name="Humphries M."/>
            <person name="Sycamore N."/>
            <person name="Barker D."/>
            <person name="Saunders D."/>
            <person name="Wallis J."/>
            <person name="Babbage A."/>
            <person name="Hammond S."/>
            <person name="Mashreghi-Mohammadi M."/>
            <person name="Barr L."/>
            <person name="Martin S."/>
            <person name="Wray P."/>
            <person name="Ellington A."/>
            <person name="Matthews N."/>
            <person name="Ellwood M."/>
            <person name="Woodmansey R."/>
            <person name="Clark G."/>
            <person name="Cooper J."/>
            <person name="Tromans A."/>
            <person name="Grafham D."/>
            <person name="Skuce C."/>
            <person name="Pandian R."/>
            <person name="Andrews R."/>
            <person name="Harrison E."/>
            <person name="Kimberley A."/>
            <person name="Garnett J."/>
            <person name="Fosker N."/>
            <person name="Hall R."/>
            <person name="Garner P."/>
            <person name="Kelly D."/>
            <person name="Bird C."/>
            <person name="Palmer S."/>
            <person name="Gehring I."/>
            <person name="Berger A."/>
            <person name="Dooley C.M."/>
            <person name="Ersan-Urun Z."/>
            <person name="Eser C."/>
            <person name="Geiger H."/>
            <person name="Geisler M."/>
            <person name="Karotki L."/>
            <person name="Kirn A."/>
            <person name="Konantz J."/>
            <person name="Konantz M."/>
            <person name="Oberlander M."/>
            <person name="Rudolph-Geiger S."/>
            <person name="Teucke M."/>
            <person name="Lanz C."/>
            <person name="Raddatz G."/>
            <person name="Osoegawa K."/>
            <person name="Zhu B."/>
            <person name="Rapp A."/>
            <person name="Widaa S."/>
            <person name="Langford C."/>
            <person name="Yang F."/>
            <person name="Schuster S.C."/>
            <person name="Carter N.P."/>
            <person name="Harrow J."/>
            <person name="Ning Z."/>
            <person name="Herrero J."/>
            <person name="Searle S.M."/>
            <person name="Enright A."/>
            <person name="Geisler R."/>
            <person name="Plasterk R.H."/>
            <person name="Lee C."/>
            <person name="Westerfield M."/>
            <person name="de Jong P.J."/>
            <person name="Zon L.I."/>
            <person name="Postlethwait J.H."/>
            <person name="Nusslein-Volhard C."/>
            <person name="Hubbard T.J."/>
            <person name="Roest Crollius H."/>
            <person name="Rogers J."/>
            <person name="Stemple D.L."/>
        </authorList>
    </citation>
    <scope>NUCLEOTIDE SEQUENCE [LARGE SCALE GENOMIC DNA]</scope>
    <source>
        <strain>Tuebingen</strain>
    </source>
</reference>
<reference key="2">
    <citation type="journal article" date="2014" name="J. Clin. Invest.">
        <title>Leiomodin-3 dysfunction results in thin filament disorganization and nemaline myopathy.</title>
        <authorList>
            <person name="Yuen M."/>
            <person name="Sandaradura S.A."/>
            <person name="Dowling J.J."/>
            <person name="Kostyukova A.S."/>
            <person name="Moroz N."/>
            <person name="Quinlan K.G."/>
            <person name="Lehtokari V.L."/>
            <person name="Ravenscroft G."/>
            <person name="Todd E.J."/>
            <person name="Ceyhan-Birsoy O."/>
            <person name="Gokhin D.S."/>
            <person name="Maluenda J."/>
            <person name="Lek M."/>
            <person name="Nolent F."/>
            <person name="Pappas C.T."/>
            <person name="Novak S.M."/>
            <person name="D'Amico A."/>
            <person name="Malfatti E."/>
            <person name="Thomas B.P."/>
            <person name="Gabriel S.B."/>
            <person name="Gupta N."/>
            <person name="Daly M.J."/>
            <person name="Ilkovski B."/>
            <person name="Houweling P.J."/>
            <person name="Davidson A.E."/>
            <person name="Swanson L.C."/>
            <person name="Brownstein C.A."/>
            <person name="Gupta V.A."/>
            <person name="Medne L."/>
            <person name="Shannon P."/>
            <person name="Martin N."/>
            <person name="Bick D.P."/>
            <person name="Flisberg A."/>
            <person name="Holmberg E."/>
            <person name="Van den Bergh P."/>
            <person name="Lapunzina P."/>
            <person name="Waddell L.B."/>
            <person name="Sloboda D.D."/>
            <person name="Bertini E."/>
            <person name="Chitayat D."/>
            <person name="Telfer W.R."/>
            <person name="Laquerriere A."/>
            <person name="Gregorio C.C."/>
            <person name="Ottenheijm C.A."/>
            <person name="Boennemann C.G."/>
            <person name="Pelin K."/>
            <person name="Beggs A.H."/>
            <person name="Hayashi Y.K."/>
            <person name="Romero N.B."/>
            <person name="Laing N.G."/>
            <person name="Nishino I."/>
            <person name="Wallgren-Pettersson C."/>
            <person name="Melki J."/>
            <person name="Fowler V.M."/>
            <person name="MacArthur D.G."/>
            <person name="North K.N."/>
            <person name="Clarke N.F."/>
        </authorList>
    </citation>
    <scope>FUNCTION</scope>
    <scope>TISSUE SPECIFICITY</scope>
    <scope>DISRUPTION PHENOTYPE</scope>
</reference>
<proteinExistence type="evidence at protein level"/>
<organism>
    <name type="scientific">Danio rerio</name>
    <name type="common">Zebrafish</name>
    <name type="synonym">Brachydanio rerio</name>
    <dbReference type="NCBI Taxonomy" id="7955"/>
    <lineage>
        <taxon>Eukaryota</taxon>
        <taxon>Metazoa</taxon>
        <taxon>Chordata</taxon>
        <taxon>Craniata</taxon>
        <taxon>Vertebrata</taxon>
        <taxon>Euteleostomi</taxon>
        <taxon>Actinopterygii</taxon>
        <taxon>Neopterygii</taxon>
        <taxon>Teleostei</taxon>
        <taxon>Ostariophysi</taxon>
        <taxon>Cypriniformes</taxon>
        <taxon>Danionidae</taxon>
        <taxon>Danioninae</taxon>
        <taxon>Danio</taxon>
    </lineage>
</organism>